<proteinExistence type="inferred from homology"/>
<protein>
    <recommendedName>
        <fullName>Putative 8-amino-7-oxononanoate synthase</fullName>
        <shortName>AONS</shortName>
        <ecNumber>2.3.1.47</ecNumber>
    </recommendedName>
    <alternativeName>
        <fullName>7-keto-8-amino-pelargonic acid synthase</fullName>
        <shortName>7-KAP synthase</shortName>
    </alternativeName>
    <alternativeName>
        <fullName>8-amino-7-ketopelargonate synthase</fullName>
    </alternativeName>
</protein>
<organism>
    <name type="scientific">Methanococcus aeolicus (strain ATCC BAA-1280 / DSM 17508 / OCM 812 / Nankai-3)</name>
    <dbReference type="NCBI Taxonomy" id="419665"/>
    <lineage>
        <taxon>Archaea</taxon>
        <taxon>Methanobacteriati</taxon>
        <taxon>Methanobacteriota</taxon>
        <taxon>Methanomada group</taxon>
        <taxon>Methanococci</taxon>
        <taxon>Methanococcales</taxon>
        <taxon>Methanococcaceae</taxon>
        <taxon>Methanococcus</taxon>
    </lineage>
</organism>
<keyword id="KW-0093">Biotin biosynthesis</keyword>
<keyword id="KW-0663">Pyridoxal phosphate</keyword>
<keyword id="KW-0808">Transferase</keyword>
<evidence type="ECO:0000250" key="1"/>
<evidence type="ECO:0000305" key="2"/>
<comment type="function">
    <text evidence="1">Catalyzes the decarboxylative condensation of pimeloyl-[acyl-carrier protein] and L-alanine to produce 8-amino-7-oxononanoate (AON), [acyl-carrier protein], and carbon dioxide.</text>
</comment>
<comment type="catalytic activity">
    <reaction>
        <text>6-carboxyhexanoyl-[ACP] + L-alanine + H(+) = (8S)-8-amino-7-oxononanoate + holo-[ACP] + CO2</text>
        <dbReference type="Rhea" id="RHEA:42288"/>
        <dbReference type="Rhea" id="RHEA-COMP:9685"/>
        <dbReference type="Rhea" id="RHEA-COMP:9955"/>
        <dbReference type="ChEBI" id="CHEBI:15378"/>
        <dbReference type="ChEBI" id="CHEBI:16526"/>
        <dbReference type="ChEBI" id="CHEBI:57972"/>
        <dbReference type="ChEBI" id="CHEBI:64479"/>
        <dbReference type="ChEBI" id="CHEBI:78846"/>
        <dbReference type="ChEBI" id="CHEBI:149468"/>
        <dbReference type="EC" id="2.3.1.47"/>
    </reaction>
</comment>
<comment type="cofactor">
    <cofactor evidence="1">
        <name>pyridoxal 5'-phosphate</name>
        <dbReference type="ChEBI" id="CHEBI:597326"/>
    </cofactor>
</comment>
<comment type="pathway">
    <text>Cofactor biosynthesis; biotin biosynthesis.</text>
</comment>
<comment type="subunit">
    <text evidence="1">Homodimer.</text>
</comment>
<comment type="similarity">
    <text evidence="2">Belongs to the class-II pyridoxal-phosphate-dependent aminotransferase family. BioF subfamily.</text>
</comment>
<sequence length="381" mass="42477">MLKSQLQQQLKKLKDNNLYRFLRKNNSYNNKNYLDFSSNDYLCLSTNKEIIDAIKEGGLKYGFGSTGSRLTAGDINHQLLEHKIAEFKGTERSLIYSSGYATNVGVISALCKKGDLILSDKLNHASIIDGCKLSKSAVLIYNHCDMDNLIDLIEKNRSSYNNLFIITDGVFSMDGDIAPLDKLKKIADEYNGILIIDDAHGTGVLGNGKGSLKHFNLKPSDNIIQIGTMSKAVGGLGGFVCGIEEVIEYLINTSRSFIYSTSLPPSVVSGCIKSFELIEEGAPTKKLQKNIGLANKIFKEHNLIEENNLTPIYPFIFKEKTMDIAEQLIKNNIFCVGIRYPTVPKGMERLRVSITVGHSEEDFRVLCERINLIIKKKFKGI</sequence>
<accession>A6UWX3</accession>
<dbReference type="EC" id="2.3.1.47"/>
<dbReference type="EMBL" id="CP000743">
    <property type="protein sequence ID" value="ABR56995.1"/>
    <property type="molecule type" value="Genomic_DNA"/>
</dbReference>
<dbReference type="RefSeq" id="WP_011974127.1">
    <property type="nucleotide sequence ID" value="NC_009635.1"/>
</dbReference>
<dbReference type="SMR" id="A6UWX3"/>
<dbReference type="STRING" id="419665.Maeo_1419"/>
<dbReference type="GeneID" id="5326505"/>
<dbReference type="KEGG" id="mae:Maeo_1419"/>
<dbReference type="eggNOG" id="arCOG00113">
    <property type="taxonomic scope" value="Archaea"/>
</dbReference>
<dbReference type="HOGENOM" id="CLU_015846_11_3_2"/>
<dbReference type="OrthoDB" id="9071at2157"/>
<dbReference type="UniPathway" id="UPA00078"/>
<dbReference type="Proteomes" id="UP000001106">
    <property type="component" value="Chromosome"/>
</dbReference>
<dbReference type="GO" id="GO:0008710">
    <property type="term" value="F:8-amino-7-oxononanoate synthase activity"/>
    <property type="evidence" value="ECO:0007669"/>
    <property type="project" value="UniProtKB-EC"/>
</dbReference>
<dbReference type="GO" id="GO:0030170">
    <property type="term" value="F:pyridoxal phosphate binding"/>
    <property type="evidence" value="ECO:0007669"/>
    <property type="project" value="InterPro"/>
</dbReference>
<dbReference type="GO" id="GO:0009102">
    <property type="term" value="P:biotin biosynthetic process"/>
    <property type="evidence" value="ECO:0007669"/>
    <property type="project" value="UniProtKB-UniPathway"/>
</dbReference>
<dbReference type="CDD" id="cd06454">
    <property type="entry name" value="KBL_like"/>
    <property type="match status" value="1"/>
</dbReference>
<dbReference type="Gene3D" id="3.90.1150.10">
    <property type="entry name" value="Aspartate Aminotransferase, domain 1"/>
    <property type="match status" value="1"/>
</dbReference>
<dbReference type="Gene3D" id="3.40.640.10">
    <property type="entry name" value="Type I PLP-dependent aspartate aminotransferase-like (Major domain)"/>
    <property type="match status" value="1"/>
</dbReference>
<dbReference type="InterPro" id="IPR001917">
    <property type="entry name" value="Aminotrans_II_pyridoxalP_BS"/>
</dbReference>
<dbReference type="InterPro" id="IPR004839">
    <property type="entry name" value="Aminotransferase_I/II_large"/>
</dbReference>
<dbReference type="InterPro" id="IPR050087">
    <property type="entry name" value="AON_synthase_class-II"/>
</dbReference>
<dbReference type="InterPro" id="IPR004723">
    <property type="entry name" value="AONS_Archaea/Proteobacteria"/>
</dbReference>
<dbReference type="InterPro" id="IPR015424">
    <property type="entry name" value="PyrdxlP-dep_Trfase"/>
</dbReference>
<dbReference type="InterPro" id="IPR015421">
    <property type="entry name" value="PyrdxlP-dep_Trfase_major"/>
</dbReference>
<dbReference type="InterPro" id="IPR015422">
    <property type="entry name" value="PyrdxlP-dep_Trfase_small"/>
</dbReference>
<dbReference type="NCBIfam" id="TIGR00858">
    <property type="entry name" value="bioF"/>
    <property type="match status" value="1"/>
</dbReference>
<dbReference type="PANTHER" id="PTHR13693:SF77">
    <property type="entry name" value="8-AMINO-7-OXONONANOATE SYNTHASE"/>
    <property type="match status" value="1"/>
</dbReference>
<dbReference type="PANTHER" id="PTHR13693">
    <property type="entry name" value="CLASS II AMINOTRANSFERASE/8-AMINO-7-OXONONANOATE SYNTHASE"/>
    <property type="match status" value="1"/>
</dbReference>
<dbReference type="Pfam" id="PF00155">
    <property type="entry name" value="Aminotran_1_2"/>
    <property type="match status" value="1"/>
</dbReference>
<dbReference type="SUPFAM" id="SSF53383">
    <property type="entry name" value="PLP-dependent transferases"/>
    <property type="match status" value="1"/>
</dbReference>
<dbReference type="PROSITE" id="PS00599">
    <property type="entry name" value="AA_TRANSFER_CLASS_2"/>
    <property type="match status" value="1"/>
</dbReference>
<gene>
    <name type="primary">bioF</name>
    <name type="ordered locus">Maeo_1419</name>
</gene>
<reference key="1">
    <citation type="submission" date="2007-06" db="EMBL/GenBank/DDBJ databases">
        <title>Complete sequence of Methanococcus aeolicus Nankai-3.</title>
        <authorList>
            <consortium name="US DOE Joint Genome Institute"/>
            <person name="Copeland A."/>
            <person name="Lucas S."/>
            <person name="Lapidus A."/>
            <person name="Barry K."/>
            <person name="Glavina del Rio T."/>
            <person name="Dalin E."/>
            <person name="Tice H."/>
            <person name="Pitluck S."/>
            <person name="Chain P."/>
            <person name="Malfatti S."/>
            <person name="Shin M."/>
            <person name="Vergez L."/>
            <person name="Schmutz J."/>
            <person name="Larimer F."/>
            <person name="Land M."/>
            <person name="Hauser L."/>
            <person name="Kyrpides N."/>
            <person name="Lykidis A."/>
            <person name="Sieprawska-Lupa M."/>
            <person name="Whitman W.B."/>
            <person name="Richardson P."/>
        </authorList>
    </citation>
    <scope>NUCLEOTIDE SEQUENCE [LARGE SCALE GENOMIC DNA]</scope>
    <source>
        <strain>ATCC BAA-1280 / DSM 17508 / OCM 812 / Nankai-3</strain>
    </source>
</reference>
<feature type="chain" id="PRO_0000381020" description="Putative 8-amino-7-oxononanoate synthase">
    <location>
        <begin position="1"/>
        <end position="381"/>
    </location>
</feature>
<feature type="binding site" evidence="1">
    <location>
        <position position="20"/>
    </location>
    <ligand>
        <name>substrate</name>
    </ligand>
</feature>
<feature type="binding site" evidence="1">
    <location>
        <begin position="99"/>
        <end position="100"/>
    </location>
    <ligand>
        <name>pyridoxal 5'-phosphate</name>
        <dbReference type="ChEBI" id="CHEBI:597326"/>
    </ligand>
</feature>
<feature type="binding site" evidence="1">
    <location>
        <position position="124"/>
    </location>
    <ligand>
        <name>substrate</name>
    </ligand>
</feature>
<feature type="binding site" evidence="1">
    <location>
        <position position="172"/>
    </location>
    <ligand>
        <name>pyridoxal 5'-phosphate</name>
        <dbReference type="ChEBI" id="CHEBI:597326"/>
    </ligand>
</feature>
<feature type="binding site" evidence="1">
    <location>
        <begin position="197"/>
        <end position="200"/>
    </location>
    <ligand>
        <name>pyridoxal 5'-phosphate</name>
        <dbReference type="ChEBI" id="CHEBI:597326"/>
    </ligand>
</feature>
<feature type="binding site" evidence="1">
    <location>
        <begin position="228"/>
        <end position="231"/>
    </location>
    <ligand>
        <name>pyridoxal 5'-phosphate</name>
        <dbReference type="ChEBI" id="CHEBI:597326"/>
    </ligand>
</feature>
<feature type="binding site" evidence="1">
    <location>
        <position position="342"/>
    </location>
    <ligand>
        <name>substrate</name>
    </ligand>
</feature>
<feature type="modified residue" description="N6-(pyridoxal phosphate)lysine" evidence="1">
    <location>
        <position position="231"/>
    </location>
</feature>
<name>BIOF_META3</name>